<accession>Q9NAM7</accession>
<protein>
    <recommendedName>
        <fullName>Phytanoyl-CoA dioxygenase domain-containing protein 1 homolog</fullName>
        <ecNumber>1.-.-.-</ecNumber>
    </recommendedName>
</protein>
<name>PHYD1_CAEEL</name>
<dbReference type="EC" id="1.-.-.-"/>
<dbReference type="EMBL" id="AL110479">
    <property type="protein sequence ID" value="CAB54355.1"/>
    <property type="molecule type" value="Genomic_DNA"/>
</dbReference>
<dbReference type="PIR" id="T26383">
    <property type="entry name" value="T26383"/>
</dbReference>
<dbReference type="RefSeq" id="NP_502898.1">
    <property type="nucleotide sequence ID" value="NM_070497.4"/>
</dbReference>
<dbReference type="SMR" id="Q9NAM7"/>
<dbReference type="BioGRID" id="43523">
    <property type="interactions" value="2"/>
</dbReference>
<dbReference type="FunCoup" id="Q9NAM7">
    <property type="interactions" value="643"/>
</dbReference>
<dbReference type="STRING" id="6239.Y105C5B.9.1"/>
<dbReference type="PaxDb" id="6239-Y105C5B.9"/>
<dbReference type="PeptideAtlas" id="Q9NAM7"/>
<dbReference type="EnsemblMetazoa" id="Y105C5B.9.1">
    <property type="protein sequence ID" value="Y105C5B.9.1"/>
    <property type="gene ID" value="WBGene00013650"/>
</dbReference>
<dbReference type="GeneID" id="178445"/>
<dbReference type="KEGG" id="cel:CELE_Y105C5B.9"/>
<dbReference type="UCSC" id="Y105C5B.9">
    <property type="organism name" value="c. elegans"/>
</dbReference>
<dbReference type="AGR" id="WB:WBGene00013650"/>
<dbReference type="CTD" id="178445"/>
<dbReference type="WormBase" id="Y105C5B.9">
    <property type="protein sequence ID" value="CE24085"/>
    <property type="gene ID" value="WBGene00013650"/>
</dbReference>
<dbReference type="eggNOG" id="KOG3290">
    <property type="taxonomic scope" value="Eukaryota"/>
</dbReference>
<dbReference type="GeneTree" id="ENSGT00390000006287"/>
<dbReference type="HOGENOM" id="CLU_048953_0_0_1"/>
<dbReference type="InParanoid" id="Q9NAM7"/>
<dbReference type="OMA" id="KYSEDNW"/>
<dbReference type="OrthoDB" id="445007at2759"/>
<dbReference type="PhylomeDB" id="Q9NAM7"/>
<dbReference type="PRO" id="PR:Q9NAM7"/>
<dbReference type="Proteomes" id="UP000001940">
    <property type="component" value="Chromosome IV"/>
</dbReference>
<dbReference type="Bgee" id="WBGene00013650">
    <property type="expression patterns" value="Expressed in embryo and 3 other cell types or tissues"/>
</dbReference>
<dbReference type="GO" id="GO:0051213">
    <property type="term" value="F:dioxygenase activity"/>
    <property type="evidence" value="ECO:0007669"/>
    <property type="project" value="UniProtKB-KW"/>
</dbReference>
<dbReference type="GO" id="GO:0046872">
    <property type="term" value="F:metal ion binding"/>
    <property type="evidence" value="ECO:0007669"/>
    <property type="project" value="UniProtKB-KW"/>
</dbReference>
<dbReference type="Gene3D" id="2.60.120.620">
    <property type="entry name" value="q2cbj1_9rhob like domain"/>
    <property type="match status" value="1"/>
</dbReference>
<dbReference type="InterPro" id="IPR008775">
    <property type="entry name" value="Phytyl_CoA_dOase-like"/>
</dbReference>
<dbReference type="PANTHER" id="PTHR20883">
    <property type="entry name" value="PHYTANOYL-COA DIOXYGENASE DOMAIN CONTAINING 1"/>
    <property type="match status" value="1"/>
</dbReference>
<dbReference type="PANTHER" id="PTHR20883:SF15">
    <property type="entry name" value="PHYTANOYL-COA DIOXYGENASE DOMAIN-CONTAINING PROTEIN 1"/>
    <property type="match status" value="1"/>
</dbReference>
<dbReference type="Pfam" id="PF05721">
    <property type="entry name" value="PhyH"/>
    <property type="match status" value="1"/>
</dbReference>
<dbReference type="SUPFAM" id="SSF51197">
    <property type="entry name" value="Clavaminate synthase-like"/>
    <property type="match status" value="1"/>
</dbReference>
<organism>
    <name type="scientific">Caenorhabditis elegans</name>
    <dbReference type="NCBI Taxonomy" id="6239"/>
    <lineage>
        <taxon>Eukaryota</taxon>
        <taxon>Metazoa</taxon>
        <taxon>Ecdysozoa</taxon>
        <taxon>Nematoda</taxon>
        <taxon>Chromadorea</taxon>
        <taxon>Rhabditida</taxon>
        <taxon>Rhabditina</taxon>
        <taxon>Rhabditomorpha</taxon>
        <taxon>Rhabditoidea</taxon>
        <taxon>Rhabditidae</taxon>
        <taxon>Peloderinae</taxon>
        <taxon>Caenorhabditis</taxon>
    </lineage>
</organism>
<reference key="1">
    <citation type="journal article" date="1998" name="Science">
        <title>Genome sequence of the nematode C. elegans: a platform for investigating biology.</title>
        <authorList>
            <consortium name="The C. elegans sequencing consortium"/>
        </authorList>
    </citation>
    <scope>NUCLEOTIDE SEQUENCE [LARGE SCALE GENOMIC DNA]</scope>
    <source>
        <strain>Bristol N2</strain>
    </source>
</reference>
<comment type="function">
    <text evidence="1">Has alpha-ketoglutarate-dependent dioxygenase activity. Does not show detectable activity towards fatty acid CoA thioesters. Is not expected to be active with phytanoyl CoA (By similarity).</text>
</comment>
<comment type="cofactor">
    <cofactor evidence="1">
        <name>Fe cation</name>
        <dbReference type="ChEBI" id="CHEBI:24875"/>
    </cofactor>
</comment>
<comment type="similarity">
    <text evidence="2">Belongs to the PhyH family. PHYHD1 subfamily.</text>
</comment>
<sequence length="288" mass="33020">MWDLREKFERDGFVVVENVFNDQEIDEMKKSISKIVNDMDLAEHPKSVFSTYDEDKHAADSYFLNSSDKIRFFFEEGAVDKDGELTVPKDKALNKIGHGLHFLDPTFEKMTFNSKIQNIFKEIGYQEPGVVQSMYIFKQPKIGGAVTDHVDSTFLRVDPIDHLTGVWIAIDEASVENGCLSFIPGSHKDTSSANYRFVRTHDTSGGALLKFIGTRPTYDQSKFQHVPISKGSLILIHGLVVHKSEANTSEKSRHAYTIHVMERKNTKWSEQNWLQETENYKFPDLYKD</sequence>
<feature type="chain" id="PRO_0000313638" description="Phytanoyl-CoA dioxygenase domain-containing protein 1 homolog">
    <location>
        <begin position="1"/>
        <end position="288"/>
    </location>
</feature>
<feature type="binding site" evidence="1">
    <location>
        <position position="95"/>
    </location>
    <ligand>
        <name>2-oxoglutarate</name>
        <dbReference type="ChEBI" id="CHEBI:16810"/>
    </ligand>
</feature>
<feature type="binding site" evidence="1">
    <location>
        <position position="134"/>
    </location>
    <ligand>
        <name>2-oxoglutarate</name>
        <dbReference type="ChEBI" id="CHEBI:16810"/>
    </ligand>
</feature>
<feature type="binding site" evidence="1">
    <location>
        <begin position="149"/>
        <end position="151"/>
    </location>
    <ligand>
        <name>2-oxoglutarate</name>
        <dbReference type="ChEBI" id="CHEBI:16810"/>
    </ligand>
</feature>
<feature type="binding site" evidence="1">
    <location>
        <position position="149"/>
    </location>
    <ligand>
        <name>Fe cation</name>
        <dbReference type="ChEBI" id="CHEBI:24875"/>
    </ligand>
</feature>
<feature type="binding site" evidence="1">
    <location>
        <position position="151"/>
    </location>
    <ligand>
        <name>Fe cation</name>
        <dbReference type="ChEBI" id="CHEBI:24875"/>
    </ligand>
</feature>
<feature type="binding site" evidence="1">
    <location>
        <position position="167"/>
    </location>
    <ligand>
        <name>2-oxoglutarate</name>
        <dbReference type="ChEBI" id="CHEBI:16810"/>
    </ligand>
</feature>
<feature type="binding site" evidence="1">
    <location>
        <position position="242"/>
    </location>
    <ligand>
        <name>Fe cation</name>
        <dbReference type="ChEBI" id="CHEBI:24875"/>
    </ligand>
</feature>
<feature type="binding site" evidence="1">
    <location>
        <position position="244"/>
    </location>
    <ligand>
        <name>2-oxoglutarate</name>
        <dbReference type="ChEBI" id="CHEBI:16810"/>
    </ligand>
</feature>
<feature type="binding site" evidence="1">
    <location>
        <position position="253"/>
    </location>
    <ligand>
        <name>2-oxoglutarate</name>
        <dbReference type="ChEBI" id="CHEBI:16810"/>
    </ligand>
</feature>
<evidence type="ECO:0000250" key="1"/>
<evidence type="ECO:0000305" key="2"/>
<gene>
    <name type="ORF">Y105C5B.9</name>
</gene>
<keyword id="KW-0223">Dioxygenase</keyword>
<keyword id="KW-0408">Iron</keyword>
<keyword id="KW-0479">Metal-binding</keyword>
<keyword id="KW-0560">Oxidoreductase</keyword>
<keyword id="KW-1185">Reference proteome</keyword>
<proteinExistence type="inferred from homology"/>